<protein>
    <recommendedName>
        <fullName>Uncharacterized Sel1-like repeat-containing protein C1B3.10c</fullName>
    </recommendedName>
</protein>
<reference key="1">
    <citation type="journal article" date="2002" name="Nature">
        <title>The genome sequence of Schizosaccharomyces pombe.</title>
        <authorList>
            <person name="Wood V."/>
            <person name="Gwilliam R."/>
            <person name="Rajandream M.A."/>
            <person name="Lyne M.H."/>
            <person name="Lyne R."/>
            <person name="Stewart A."/>
            <person name="Sgouros J.G."/>
            <person name="Peat N."/>
            <person name="Hayles J."/>
            <person name="Baker S.G."/>
            <person name="Basham D."/>
            <person name="Bowman S."/>
            <person name="Brooks K."/>
            <person name="Brown D."/>
            <person name="Brown S."/>
            <person name="Chillingworth T."/>
            <person name="Churcher C.M."/>
            <person name="Collins M."/>
            <person name="Connor R."/>
            <person name="Cronin A."/>
            <person name="Davis P."/>
            <person name="Feltwell T."/>
            <person name="Fraser A."/>
            <person name="Gentles S."/>
            <person name="Goble A."/>
            <person name="Hamlin N."/>
            <person name="Harris D.E."/>
            <person name="Hidalgo J."/>
            <person name="Hodgson G."/>
            <person name="Holroyd S."/>
            <person name="Hornsby T."/>
            <person name="Howarth S."/>
            <person name="Huckle E.J."/>
            <person name="Hunt S."/>
            <person name="Jagels K."/>
            <person name="James K.D."/>
            <person name="Jones L."/>
            <person name="Jones M."/>
            <person name="Leather S."/>
            <person name="McDonald S."/>
            <person name="McLean J."/>
            <person name="Mooney P."/>
            <person name="Moule S."/>
            <person name="Mungall K.L."/>
            <person name="Murphy L.D."/>
            <person name="Niblett D."/>
            <person name="Odell C."/>
            <person name="Oliver K."/>
            <person name="O'Neil S."/>
            <person name="Pearson D."/>
            <person name="Quail M.A."/>
            <person name="Rabbinowitsch E."/>
            <person name="Rutherford K.M."/>
            <person name="Rutter S."/>
            <person name="Saunders D."/>
            <person name="Seeger K."/>
            <person name="Sharp S."/>
            <person name="Skelton J."/>
            <person name="Simmonds M.N."/>
            <person name="Squares R."/>
            <person name="Squares S."/>
            <person name="Stevens K."/>
            <person name="Taylor K."/>
            <person name="Taylor R.G."/>
            <person name="Tivey A."/>
            <person name="Walsh S.V."/>
            <person name="Warren T."/>
            <person name="Whitehead S."/>
            <person name="Woodward J.R."/>
            <person name="Volckaert G."/>
            <person name="Aert R."/>
            <person name="Robben J."/>
            <person name="Grymonprez B."/>
            <person name="Weltjens I."/>
            <person name="Vanstreels E."/>
            <person name="Rieger M."/>
            <person name="Schaefer M."/>
            <person name="Mueller-Auer S."/>
            <person name="Gabel C."/>
            <person name="Fuchs M."/>
            <person name="Duesterhoeft A."/>
            <person name="Fritzc C."/>
            <person name="Holzer E."/>
            <person name="Moestl D."/>
            <person name="Hilbert H."/>
            <person name="Borzym K."/>
            <person name="Langer I."/>
            <person name="Beck A."/>
            <person name="Lehrach H."/>
            <person name="Reinhardt R."/>
            <person name="Pohl T.M."/>
            <person name="Eger P."/>
            <person name="Zimmermann W."/>
            <person name="Wedler H."/>
            <person name="Wambutt R."/>
            <person name="Purnelle B."/>
            <person name="Goffeau A."/>
            <person name="Cadieu E."/>
            <person name="Dreano S."/>
            <person name="Gloux S."/>
            <person name="Lelaure V."/>
            <person name="Mottier S."/>
            <person name="Galibert F."/>
            <person name="Aves S.J."/>
            <person name="Xiang Z."/>
            <person name="Hunt C."/>
            <person name="Moore K."/>
            <person name="Hurst S.M."/>
            <person name="Lucas M."/>
            <person name="Rochet M."/>
            <person name="Gaillardin C."/>
            <person name="Tallada V.A."/>
            <person name="Garzon A."/>
            <person name="Thode G."/>
            <person name="Daga R.R."/>
            <person name="Cruzado L."/>
            <person name="Jimenez J."/>
            <person name="Sanchez M."/>
            <person name="del Rey F."/>
            <person name="Benito J."/>
            <person name="Dominguez A."/>
            <person name="Revuelta J.L."/>
            <person name="Moreno S."/>
            <person name="Armstrong J."/>
            <person name="Forsburg S.L."/>
            <person name="Cerutti L."/>
            <person name="Lowe T."/>
            <person name="McCombie W.R."/>
            <person name="Paulsen I."/>
            <person name="Potashkin J."/>
            <person name="Shpakovski G.V."/>
            <person name="Ussery D."/>
            <person name="Barrell B.G."/>
            <person name="Nurse P."/>
        </authorList>
    </citation>
    <scope>NUCLEOTIDE SEQUENCE [LARGE SCALE GENOMIC DNA]</scope>
    <source>
        <strain>972 / ATCC 24843</strain>
    </source>
</reference>
<sequence>MGVSVLTFHVSLFLKRILSIAFFLLSLSTLLRIVNAQQYVDNNIGSMVLSDYDFAETPSVRVQRALEILRYYYEQEDVTYEEIIIQRNHAIELLRSASHDNNTDAMLYLANIEFFGLFEIIPEIEDSVKYYDMLQKANGSAFANNMMGFFYSTSFSEYASNNPALARIHWELAAKQGSLDAHQFLAYHNLIALNMPQSDEEAVKHYKFISDHLFEEECGSNVTYLKCIWPEIQDYNFAGENGMGVYGAASAYTYSDAYQALHTRSQYLREMSNSIEDWDYELMFEVAKLRLHGMYKYPRNYTVSDVLFRKVSRQYWPYTSENSVLANTPQSIISLAAQSCGYLGLLHLFDKGPLFDIDKAYWWFKRGATKNDSNSYYGLGYMAYHGLTSNGVDREKGMRLINLAVMNENPHALMFLGLIRLEEARYEEAYHLFLRAATQKSVISYKYLADCYYNGTGTSRSMISASLYYKKFVEAIRASATSMAIALEEIDEYGYFHNSFVYYLYAAQMGYALAEINAAYLMDENKFLINSVFRYFNYTQSEQEAAHDKFAYEFYSRAAAQGDIDAIFKLGDYYYYGIGTPKDYSKAYTCYKIAYEQSSIGMGLWNMAYMHEYGIGRDQDIYIARRLLDELSSNQNSYFPLKVAIFWINIHQLYIKLLKLLRLR</sequence>
<feature type="signal peptide" evidence="1">
    <location>
        <begin position="1"/>
        <end position="35"/>
    </location>
</feature>
<feature type="chain" id="PRO_0000350744" description="Uncharacterized Sel1-like repeat-containing protein C1B3.10c">
    <location>
        <begin position="36"/>
        <end position="664"/>
    </location>
</feature>
<feature type="repeat" description="Sel1-like 1">
    <location>
        <begin position="141"/>
        <end position="178"/>
    </location>
</feature>
<feature type="repeat" description="Sel1-like 2">
    <location>
        <begin position="179"/>
        <end position="214"/>
    </location>
</feature>
<feature type="repeat" description="Sel1-like 3">
    <location>
        <begin position="337"/>
        <end position="372"/>
    </location>
</feature>
<feature type="repeat" description="Sel1-like 4">
    <location>
        <begin position="373"/>
        <end position="409"/>
    </location>
</feature>
<feature type="repeat" description="Sel1-like 5">
    <location>
        <begin position="410"/>
        <end position="441"/>
    </location>
</feature>
<feature type="repeat" description="Sel1-like 6">
    <location>
        <begin position="442"/>
        <end position="477"/>
    </location>
</feature>
<feature type="repeat" description="Sel1-like 7">
    <location>
        <begin position="564"/>
        <end position="599"/>
    </location>
</feature>
<feature type="repeat" description="Sel1-like 8">
    <location>
        <begin position="601"/>
        <end position="636"/>
    </location>
</feature>
<feature type="glycosylation site" description="N-linked (GlcNAc...) asparagine" evidence="1">
    <location>
        <position position="101"/>
    </location>
</feature>
<feature type="glycosylation site" description="N-linked (GlcNAc...) asparagine" evidence="1">
    <location>
        <position position="138"/>
    </location>
</feature>
<feature type="glycosylation site" description="N-linked (GlcNAc...) asparagine" evidence="1">
    <location>
        <position position="221"/>
    </location>
</feature>
<feature type="glycosylation site" description="N-linked (GlcNAc...) asparagine" evidence="1">
    <location>
        <position position="300"/>
    </location>
</feature>
<feature type="glycosylation site" description="N-linked (GlcNAc...) asparagine" evidence="1">
    <location>
        <position position="371"/>
    </location>
</feature>
<feature type="glycosylation site" description="N-linked (GlcNAc...) asparagine" evidence="1">
    <location>
        <position position="454"/>
    </location>
</feature>
<feature type="glycosylation site" description="N-linked (GlcNAc...) asparagine" evidence="1">
    <location>
        <position position="537"/>
    </location>
</feature>
<organism>
    <name type="scientific">Schizosaccharomyces pombe (strain 972 / ATCC 24843)</name>
    <name type="common">Fission yeast</name>
    <dbReference type="NCBI Taxonomy" id="284812"/>
    <lineage>
        <taxon>Eukaryota</taxon>
        <taxon>Fungi</taxon>
        <taxon>Dikarya</taxon>
        <taxon>Ascomycota</taxon>
        <taxon>Taphrinomycotina</taxon>
        <taxon>Schizosaccharomycetes</taxon>
        <taxon>Schizosaccharomycetales</taxon>
        <taxon>Schizosaccharomycetaceae</taxon>
        <taxon>Schizosaccharomyces</taxon>
    </lineage>
</organism>
<dbReference type="EMBL" id="CU329670">
    <property type="protein sequence ID" value="CAB11247.3"/>
    <property type="molecule type" value="Genomic_DNA"/>
</dbReference>
<dbReference type="PIR" id="T38028">
    <property type="entry name" value="T38028"/>
</dbReference>
<dbReference type="SMR" id="O13875"/>
<dbReference type="BioGRID" id="278622">
    <property type="interactions" value="7"/>
</dbReference>
<dbReference type="FunCoup" id="O13875">
    <property type="interactions" value="141"/>
</dbReference>
<dbReference type="STRING" id="284812.O13875"/>
<dbReference type="iPTMnet" id="O13875"/>
<dbReference type="PaxDb" id="4896-SPAC1B3.10c.1"/>
<dbReference type="EnsemblFungi" id="SPAC1B3.10c.1">
    <property type="protein sequence ID" value="SPAC1B3.10c.1:pep"/>
    <property type="gene ID" value="SPAC1B3.10c"/>
</dbReference>
<dbReference type="KEGG" id="spo:2542146"/>
<dbReference type="PomBase" id="SPAC1B3.10c"/>
<dbReference type="VEuPathDB" id="FungiDB:SPAC1B3.10c"/>
<dbReference type="eggNOG" id="KOG1550">
    <property type="taxonomic scope" value="Eukaryota"/>
</dbReference>
<dbReference type="HOGENOM" id="CLU_407185_0_0_1"/>
<dbReference type="InParanoid" id="O13875"/>
<dbReference type="OMA" id="MDLQARK"/>
<dbReference type="PhylomeDB" id="O13875"/>
<dbReference type="PRO" id="PR:O13875"/>
<dbReference type="Proteomes" id="UP000002485">
    <property type="component" value="Chromosome I"/>
</dbReference>
<dbReference type="GO" id="GO:0005789">
    <property type="term" value="C:endoplasmic reticulum membrane"/>
    <property type="evidence" value="ECO:0000318"/>
    <property type="project" value="GO_Central"/>
</dbReference>
<dbReference type="GO" id="GO:0036503">
    <property type="term" value="P:ERAD pathway"/>
    <property type="evidence" value="ECO:0000318"/>
    <property type="project" value="GO_Central"/>
</dbReference>
<dbReference type="Gene3D" id="1.25.40.10">
    <property type="entry name" value="Tetratricopeptide repeat domain"/>
    <property type="match status" value="3"/>
</dbReference>
<dbReference type="InterPro" id="IPR006597">
    <property type="entry name" value="Sel1-like"/>
</dbReference>
<dbReference type="InterPro" id="IPR050767">
    <property type="entry name" value="Sel1_AlgK"/>
</dbReference>
<dbReference type="InterPro" id="IPR011990">
    <property type="entry name" value="TPR-like_helical_dom_sf"/>
</dbReference>
<dbReference type="PANTHER" id="PTHR11102">
    <property type="entry name" value="SEL-1-LIKE PROTEIN"/>
    <property type="match status" value="1"/>
</dbReference>
<dbReference type="PANTHER" id="PTHR11102:SF147">
    <property type="entry name" value="SEL1L ADAPTOR SUBUNIT OF ERAD E3 UBIQUITIN LIGASE"/>
    <property type="match status" value="1"/>
</dbReference>
<dbReference type="Pfam" id="PF08238">
    <property type="entry name" value="Sel1"/>
    <property type="match status" value="9"/>
</dbReference>
<dbReference type="SMART" id="SM00671">
    <property type="entry name" value="SEL1"/>
    <property type="match status" value="8"/>
</dbReference>
<dbReference type="SUPFAM" id="SSF81901">
    <property type="entry name" value="HCP-like"/>
    <property type="match status" value="3"/>
</dbReference>
<comment type="similarity">
    <text evidence="2">Belongs to the sel-1 family.</text>
</comment>
<gene>
    <name type="ORF">SPAC1B3.10c</name>
</gene>
<accession>O13875</accession>
<keyword id="KW-0325">Glycoprotein</keyword>
<keyword id="KW-1185">Reference proteome</keyword>
<keyword id="KW-0677">Repeat</keyword>
<keyword id="KW-0732">Signal</keyword>
<evidence type="ECO:0000255" key="1"/>
<evidence type="ECO:0000305" key="2"/>
<name>YE1A_SCHPO</name>
<proteinExistence type="inferred from homology"/>